<accession>Q9F1K9</accession>
<keyword id="KW-0002">3D-structure</keyword>
<keyword id="KW-0903">Direct protein sequencing</keyword>
<keyword id="KW-0472">Membrane</keyword>
<keyword id="KW-0602">Photosynthesis</keyword>
<keyword id="KW-0604">Photosystem II</keyword>
<keyword id="KW-0674">Reaction center</keyword>
<keyword id="KW-1185">Reference proteome</keyword>
<keyword id="KW-0793">Thylakoid</keyword>
<keyword id="KW-0812">Transmembrane</keyword>
<keyword id="KW-1133">Transmembrane helix</keyword>
<gene>
    <name evidence="1" type="primary">psbK</name>
    <name type="ordered locus">tsl0176</name>
</gene>
<protein>
    <recommendedName>
        <fullName evidence="1">Photosystem II reaction center protein K</fullName>
        <shortName evidence="1">PSII-K</shortName>
    </recommendedName>
</protein>
<name>PSBK_THEVB</name>
<dbReference type="EMBL" id="AB052850">
    <property type="protein sequence ID" value="BAB20628.1"/>
    <property type="molecule type" value="Genomic_DNA"/>
</dbReference>
<dbReference type="EMBL" id="BA000039">
    <property type="protein sequence ID" value="BAC07729.1"/>
    <property type="molecule type" value="Genomic_DNA"/>
</dbReference>
<dbReference type="RefSeq" id="NP_680967.1">
    <property type="nucleotide sequence ID" value="NC_004113.1"/>
</dbReference>
<dbReference type="RefSeq" id="WP_011056031.1">
    <property type="nucleotide sequence ID" value="NC_004113.1"/>
</dbReference>
<dbReference type="PDB" id="1S5L">
    <property type="method" value="X-ray"/>
    <property type="resolution" value="3.50 A"/>
    <property type="chains" value="K/k=10-46"/>
</dbReference>
<dbReference type="PDB" id="2AXT">
    <property type="method" value="X-ray"/>
    <property type="resolution" value="3.00 A"/>
    <property type="chains" value="K/k=10-46"/>
</dbReference>
<dbReference type="PDB" id="3KZI">
    <property type="method" value="X-ray"/>
    <property type="resolution" value="3.60 A"/>
    <property type="chains" value="K=10-46"/>
</dbReference>
<dbReference type="PDB" id="4FBY">
    <property type="method" value="X-ray"/>
    <property type="resolution" value="6.56 A"/>
    <property type="chains" value="K/c=10-46"/>
</dbReference>
<dbReference type="PDB" id="4IXQ">
    <property type="method" value="X-ray"/>
    <property type="resolution" value="5.70 A"/>
    <property type="chains" value="K/k=1-46"/>
</dbReference>
<dbReference type="PDB" id="4IXR">
    <property type="method" value="X-ray"/>
    <property type="resolution" value="5.90 A"/>
    <property type="chains" value="K/k=1-46"/>
</dbReference>
<dbReference type="PDB" id="4PBU">
    <property type="method" value="X-ray"/>
    <property type="resolution" value="5.00 A"/>
    <property type="chains" value="K/k=10-46"/>
</dbReference>
<dbReference type="PDB" id="4PJ0">
    <property type="method" value="X-ray"/>
    <property type="resolution" value="2.44 A"/>
    <property type="chains" value="K/k=1-46"/>
</dbReference>
<dbReference type="PDB" id="4RVY">
    <property type="method" value="X-ray"/>
    <property type="resolution" value="5.50 A"/>
    <property type="chains" value="K/k=10-46"/>
</dbReference>
<dbReference type="PDB" id="4TNH">
    <property type="method" value="X-ray"/>
    <property type="resolution" value="4.90 A"/>
    <property type="chains" value="K/k=1-46"/>
</dbReference>
<dbReference type="PDB" id="4TNI">
    <property type="method" value="X-ray"/>
    <property type="resolution" value="4.60 A"/>
    <property type="chains" value="K/k=1-46"/>
</dbReference>
<dbReference type="PDB" id="4TNJ">
    <property type="method" value="X-ray"/>
    <property type="resolution" value="4.50 A"/>
    <property type="chains" value="K/k=1-46"/>
</dbReference>
<dbReference type="PDB" id="4TNK">
    <property type="method" value="X-ray"/>
    <property type="resolution" value="5.20 A"/>
    <property type="chains" value="K/k=1-46"/>
</dbReference>
<dbReference type="PDB" id="4V62">
    <property type="method" value="X-ray"/>
    <property type="resolution" value="2.90 A"/>
    <property type="chains" value="AK/BK=10-46"/>
</dbReference>
<dbReference type="PDB" id="4V82">
    <property type="method" value="X-ray"/>
    <property type="resolution" value="3.20 A"/>
    <property type="chains" value="AK/BK=10-46"/>
</dbReference>
<dbReference type="PDB" id="5E79">
    <property type="method" value="X-ray"/>
    <property type="resolution" value="3.50 A"/>
    <property type="chains" value="K/k=10-46"/>
</dbReference>
<dbReference type="PDB" id="5E7C">
    <property type="method" value="X-ray"/>
    <property type="resolution" value="4.50 A"/>
    <property type="chains" value="K/k=10-46"/>
</dbReference>
<dbReference type="PDB" id="5H2F">
    <property type="method" value="X-ray"/>
    <property type="resolution" value="2.20 A"/>
    <property type="chains" value="K/k=10-46"/>
</dbReference>
<dbReference type="PDB" id="5KAF">
    <property type="method" value="X-ray"/>
    <property type="resolution" value="3.00 A"/>
    <property type="chains" value="K/k=1-46"/>
</dbReference>
<dbReference type="PDB" id="5KAI">
    <property type="method" value="X-ray"/>
    <property type="resolution" value="2.80 A"/>
    <property type="chains" value="K/k=1-46"/>
</dbReference>
<dbReference type="PDB" id="5MX2">
    <property type="method" value="X-ray"/>
    <property type="resolution" value="2.20 A"/>
    <property type="chains" value="K/k=1-46"/>
</dbReference>
<dbReference type="PDB" id="5TIS">
    <property type="method" value="X-ray"/>
    <property type="resolution" value="2.25 A"/>
    <property type="chains" value="K/k=1-46"/>
</dbReference>
<dbReference type="PDB" id="5ZZN">
    <property type="method" value="X-ray"/>
    <property type="resolution" value="2.10 A"/>
    <property type="chains" value="K/k=10-46"/>
</dbReference>
<dbReference type="PDB" id="6DHE">
    <property type="method" value="X-ray"/>
    <property type="resolution" value="2.05 A"/>
    <property type="chains" value="K/k=10-46"/>
</dbReference>
<dbReference type="PDB" id="6DHF">
    <property type="method" value="X-ray"/>
    <property type="resolution" value="2.08 A"/>
    <property type="chains" value="K/k=10-46"/>
</dbReference>
<dbReference type="PDB" id="6DHG">
    <property type="method" value="X-ray"/>
    <property type="resolution" value="2.50 A"/>
    <property type="chains" value="K/k=10-46"/>
</dbReference>
<dbReference type="PDB" id="6DHH">
    <property type="method" value="X-ray"/>
    <property type="resolution" value="2.20 A"/>
    <property type="chains" value="K/k=10-46"/>
</dbReference>
<dbReference type="PDB" id="6DHO">
    <property type="method" value="X-ray"/>
    <property type="resolution" value="2.07 A"/>
    <property type="chains" value="K/k=10-46"/>
</dbReference>
<dbReference type="PDB" id="6DHP">
    <property type="method" value="X-ray"/>
    <property type="resolution" value="2.04 A"/>
    <property type="chains" value="K/k=10-46"/>
</dbReference>
<dbReference type="PDB" id="6W1O">
    <property type="method" value="X-ray"/>
    <property type="resolution" value="2.08 A"/>
    <property type="chains" value="K/k=1-46"/>
</dbReference>
<dbReference type="PDB" id="6W1P">
    <property type="method" value="X-ray"/>
    <property type="resolution" value="2.26 A"/>
    <property type="chains" value="K/k=1-46"/>
</dbReference>
<dbReference type="PDB" id="6W1Q">
    <property type="method" value="X-ray"/>
    <property type="resolution" value="2.27 A"/>
    <property type="chains" value="K/k=1-46"/>
</dbReference>
<dbReference type="PDB" id="6W1R">
    <property type="method" value="X-ray"/>
    <property type="resolution" value="2.23 A"/>
    <property type="chains" value="K/k=1-46"/>
</dbReference>
<dbReference type="PDB" id="6W1T">
    <property type="method" value="X-ray"/>
    <property type="resolution" value="2.01 A"/>
    <property type="chains" value="K/k=1-46"/>
</dbReference>
<dbReference type="PDB" id="6W1U">
    <property type="method" value="X-ray"/>
    <property type="resolution" value="2.09 A"/>
    <property type="chains" value="K/k=1-46"/>
</dbReference>
<dbReference type="PDB" id="6W1V">
    <property type="method" value="X-ray"/>
    <property type="resolution" value="2.09 A"/>
    <property type="chains" value="K/k=1-46"/>
</dbReference>
<dbReference type="PDB" id="7DXH">
    <property type="method" value="EM"/>
    <property type="resolution" value="3.14 A"/>
    <property type="chains" value="k=1-46"/>
</dbReference>
<dbReference type="PDB" id="7NHO">
    <property type="method" value="EM"/>
    <property type="resolution" value="2.66 A"/>
    <property type="chains" value="K=1-46"/>
</dbReference>
<dbReference type="PDB" id="7NHP">
    <property type="method" value="EM"/>
    <property type="resolution" value="2.72 A"/>
    <property type="chains" value="K=1-46"/>
</dbReference>
<dbReference type="PDB" id="7NHQ">
    <property type="method" value="EM"/>
    <property type="resolution" value="2.68 A"/>
    <property type="chains" value="K=1-46"/>
</dbReference>
<dbReference type="PDB" id="7RF1">
    <property type="method" value="X-ray"/>
    <property type="resolution" value="1.89 A"/>
    <property type="chains" value="K/k=1-46"/>
</dbReference>
<dbReference type="PDB" id="7RF2">
    <property type="method" value="X-ray"/>
    <property type="resolution" value="2.08 A"/>
    <property type="chains" value="K/k=1-46"/>
</dbReference>
<dbReference type="PDB" id="7RF3">
    <property type="method" value="X-ray"/>
    <property type="resolution" value="2.26 A"/>
    <property type="chains" value="K/k=1-46"/>
</dbReference>
<dbReference type="PDB" id="7RF4">
    <property type="method" value="X-ray"/>
    <property type="resolution" value="2.27 A"/>
    <property type="chains" value="K/k=1-46"/>
</dbReference>
<dbReference type="PDB" id="7RF5">
    <property type="method" value="X-ray"/>
    <property type="resolution" value="2.23 A"/>
    <property type="chains" value="K/k=1-46"/>
</dbReference>
<dbReference type="PDB" id="7RF6">
    <property type="method" value="X-ray"/>
    <property type="resolution" value="2.01 A"/>
    <property type="chains" value="K/k=1-46"/>
</dbReference>
<dbReference type="PDB" id="7RF7">
    <property type="method" value="X-ray"/>
    <property type="resolution" value="2.09 A"/>
    <property type="chains" value="K/k=1-46"/>
</dbReference>
<dbReference type="PDB" id="7RF8">
    <property type="method" value="X-ray"/>
    <property type="resolution" value="2.09 A"/>
    <property type="chains" value="K/k=1-46"/>
</dbReference>
<dbReference type="PDB" id="7YQ2">
    <property type="method" value="X-ray"/>
    <property type="resolution" value="1.90 A"/>
    <property type="chains" value="K/k=1-46"/>
</dbReference>
<dbReference type="PDB" id="7YQ7">
    <property type="method" value="X-ray"/>
    <property type="resolution" value="1.90 A"/>
    <property type="chains" value="K/k=1-46"/>
</dbReference>
<dbReference type="PDB" id="8EZ5">
    <property type="method" value="X-ray"/>
    <property type="resolution" value="2.09 A"/>
    <property type="chains" value="K/k=1-46"/>
</dbReference>
<dbReference type="PDB" id="8F4C">
    <property type="method" value="X-ray"/>
    <property type="resolution" value="2.00 A"/>
    <property type="chains" value="K/k=1-46"/>
</dbReference>
<dbReference type="PDB" id="8F4D">
    <property type="method" value="X-ray"/>
    <property type="resolution" value="2.15 A"/>
    <property type="chains" value="K/k=1-46"/>
</dbReference>
<dbReference type="PDB" id="8F4E">
    <property type="method" value="X-ray"/>
    <property type="resolution" value="2.09 A"/>
    <property type="chains" value="K/k=1-46"/>
</dbReference>
<dbReference type="PDB" id="8F4F">
    <property type="method" value="X-ray"/>
    <property type="resolution" value="2.03 A"/>
    <property type="chains" value="K/k=1-46"/>
</dbReference>
<dbReference type="PDB" id="8F4G">
    <property type="method" value="X-ray"/>
    <property type="resolution" value="2.03 A"/>
    <property type="chains" value="K/k=1-46"/>
</dbReference>
<dbReference type="PDB" id="8F4H">
    <property type="method" value="X-ray"/>
    <property type="resolution" value="2.10 A"/>
    <property type="chains" value="K/k=1-46"/>
</dbReference>
<dbReference type="PDB" id="8F4I">
    <property type="method" value="X-ray"/>
    <property type="resolution" value="2.00 A"/>
    <property type="chains" value="K/k=1-46"/>
</dbReference>
<dbReference type="PDB" id="8F4J">
    <property type="method" value="X-ray"/>
    <property type="resolution" value="2.00 A"/>
    <property type="chains" value="K/k=1-46"/>
</dbReference>
<dbReference type="PDB" id="8F4K">
    <property type="method" value="X-ray"/>
    <property type="resolution" value="2.16 A"/>
    <property type="chains" value="K/k=1-46"/>
</dbReference>
<dbReference type="PDB" id="9EVX">
    <property type="method" value="EM"/>
    <property type="resolution" value="1.71 A"/>
    <property type="chains" value="K/k=1-46"/>
</dbReference>
<dbReference type="PDBsum" id="1S5L"/>
<dbReference type="PDBsum" id="2AXT"/>
<dbReference type="PDBsum" id="3KZI"/>
<dbReference type="PDBsum" id="4FBY"/>
<dbReference type="PDBsum" id="4IXQ"/>
<dbReference type="PDBsum" id="4IXR"/>
<dbReference type="PDBsum" id="4PBU"/>
<dbReference type="PDBsum" id="4PJ0"/>
<dbReference type="PDBsum" id="4RVY"/>
<dbReference type="PDBsum" id="4TNH"/>
<dbReference type="PDBsum" id="4TNI"/>
<dbReference type="PDBsum" id="4TNJ"/>
<dbReference type="PDBsum" id="4TNK"/>
<dbReference type="PDBsum" id="4V62"/>
<dbReference type="PDBsum" id="4V82"/>
<dbReference type="PDBsum" id="5E79"/>
<dbReference type="PDBsum" id="5E7C"/>
<dbReference type="PDBsum" id="5H2F"/>
<dbReference type="PDBsum" id="5KAF"/>
<dbReference type="PDBsum" id="5KAI"/>
<dbReference type="PDBsum" id="5MX2"/>
<dbReference type="PDBsum" id="5TIS"/>
<dbReference type="PDBsum" id="5ZZN"/>
<dbReference type="PDBsum" id="6DHE"/>
<dbReference type="PDBsum" id="6DHF"/>
<dbReference type="PDBsum" id="6DHG"/>
<dbReference type="PDBsum" id="6DHH"/>
<dbReference type="PDBsum" id="6DHO"/>
<dbReference type="PDBsum" id="6DHP"/>
<dbReference type="PDBsum" id="6W1O"/>
<dbReference type="PDBsum" id="6W1P"/>
<dbReference type="PDBsum" id="6W1Q"/>
<dbReference type="PDBsum" id="6W1R"/>
<dbReference type="PDBsum" id="6W1T"/>
<dbReference type="PDBsum" id="6W1U"/>
<dbReference type="PDBsum" id="6W1V"/>
<dbReference type="PDBsum" id="7DXH"/>
<dbReference type="PDBsum" id="7NHO"/>
<dbReference type="PDBsum" id="7NHP"/>
<dbReference type="PDBsum" id="7NHQ"/>
<dbReference type="PDBsum" id="7RF1"/>
<dbReference type="PDBsum" id="7RF2"/>
<dbReference type="PDBsum" id="7RF3"/>
<dbReference type="PDBsum" id="7RF4"/>
<dbReference type="PDBsum" id="7RF5"/>
<dbReference type="PDBsum" id="7RF6"/>
<dbReference type="PDBsum" id="7RF7"/>
<dbReference type="PDBsum" id="7RF8"/>
<dbReference type="PDBsum" id="7YQ2"/>
<dbReference type="PDBsum" id="7YQ7"/>
<dbReference type="PDBsum" id="8EZ5"/>
<dbReference type="PDBsum" id="8F4C"/>
<dbReference type="PDBsum" id="8F4D"/>
<dbReference type="PDBsum" id="8F4E"/>
<dbReference type="PDBsum" id="8F4F"/>
<dbReference type="PDBsum" id="8F4G"/>
<dbReference type="PDBsum" id="8F4H"/>
<dbReference type="PDBsum" id="8F4I"/>
<dbReference type="PDBsum" id="8F4J"/>
<dbReference type="PDBsum" id="8F4K"/>
<dbReference type="PDBsum" id="9EVX"/>
<dbReference type="EMDB" id="EMD-12335"/>
<dbReference type="EMDB" id="EMD-12336"/>
<dbReference type="EMDB" id="EMD-12337"/>
<dbReference type="EMDB" id="EMD-30909"/>
<dbReference type="EMDB" id="EMD-50019"/>
<dbReference type="SMR" id="Q9F1K9"/>
<dbReference type="DIP" id="DIP-48496N"/>
<dbReference type="IntAct" id="Q9F1K9">
    <property type="interactions" value="1"/>
</dbReference>
<dbReference type="STRING" id="197221.gene:10746757"/>
<dbReference type="EnsemblBacteria" id="BAC07729">
    <property type="protein sequence ID" value="BAC07729"/>
    <property type="gene ID" value="BAC07729"/>
</dbReference>
<dbReference type="KEGG" id="tel:tsl0176"/>
<dbReference type="PATRIC" id="fig|197221.4.peg.182"/>
<dbReference type="eggNOG" id="ENOG5032YQR">
    <property type="taxonomic scope" value="Bacteria"/>
</dbReference>
<dbReference type="EvolutionaryTrace" id="Q9F1K9"/>
<dbReference type="Proteomes" id="UP000000440">
    <property type="component" value="Chromosome"/>
</dbReference>
<dbReference type="GO" id="GO:0009539">
    <property type="term" value="C:photosystem II reaction center"/>
    <property type="evidence" value="ECO:0007669"/>
    <property type="project" value="InterPro"/>
</dbReference>
<dbReference type="GO" id="GO:0031676">
    <property type="term" value="C:plasma membrane-derived thylakoid membrane"/>
    <property type="evidence" value="ECO:0007669"/>
    <property type="project" value="UniProtKB-SubCell"/>
</dbReference>
<dbReference type="GO" id="GO:0015979">
    <property type="term" value="P:photosynthesis"/>
    <property type="evidence" value="ECO:0007669"/>
    <property type="project" value="UniProtKB-UniRule"/>
</dbReference>
<dbReference type="HAMAP" id="MF_00441">
    <property type="entry name" value="PSII_PsbK"/>
    <property type="match status" value="1"/>
</dbReference>
<dbReference type="InterPro" id="IPR003687">
    <property type="entry name" value="PSII_PsbK"/>
</dbReference>
<dbReference type="InterPro" id="IPR037270">
    <property type="entry name" value="PSII_PsbK_sf"/>
</dbReference>
<dbReference type="NCBIfam" id="NF002715">
    <property type="entry name" value="PRK02553.1"/>
    <property type="match status" value="1"/>
</dbReference>
<dbReference type="PANTHER" id="PTHR35325">
    <property type="match status" value="1"/>
</dbReference>
<dbReference type="PANTHER" id="PTHR35325:SF1">
    <property type="entry name" value="PHOTOSYSTEM II REACTION CENTER PROTEIN K"/>
    <property type="match status" value="1"/>
</dbReference>
<dbReference type="Pfam" id="PF02533">
    <property type="entry name" value="PsbK"/>
    <property type="match status" value="1"/>
</dbReference>
<dbReference type="SUPFAM" id="SSF161037">
    <property type="entry name" value="Photosystem II reaction center protein K, PsbK"/>
    <property type="match status" value="1"/>
</dbReference>
<organism>
    <name type="scientific">Thermosynechococcus vestitus (strain NIES-2133 / IAM M-273 / BP-1)</name>
    <dbReference type="NCBI Taxonomy" id="197221"/>
    <lineage>
        <taxon>Bacteria</taxon>
        <taxon>Bacillati</taxon>
        <taxon>Cyanobacteriota</taxon>
        <taxon>Cyanophyceae</taxon>
        <taxon>Acaryochloridales</taxon>
        <taxon>Thermosynechococcaceae</taxon>
        <taxon>Thermosynechococcus</taxon>
    </lineage>
</organism>
<reference key="1">
    <citation type="submission" date="2000-12" db="EMBL/GenBank/DDBJ databases">
        <title>Cloning and disruption of the psbK gene from thermophilic Thermosynechococcus elongatus.</title>
        <authorList>
            <person name="Katoh H."/>
            <person name="Ikeuchi M."/>
        </authorList>
    </citation>
    <scope>NUCLEOTIDE SEQUENCE [GENOMIC DNA]</scope>
</reference>
<reference key="2">
    <citation type="journal article" date="2002" name="DNA Res.">
        <title>Complete genome structure of the thermophilic cyanobacterium Thermosynechococcus elongatus BP-1.</title>
        <authorList>
            <person name="Nakamura Y."/>
            <person name="Kaneko T."/>
            <person name="Sato S."/>
            <person name="Ikeuchi M."/>
            <person name="Katoh H."/>
            <person name="Sasamoto S."/>
            <person name="Watanabe A."/>
            <person name="Iriguchi M."/>
            <person name="Kawashima K."/>
            <person name="Kimura T."/>
            <person name="Kishida Y."/>
            <person name="Kiyokawa C."/>
            <person name="Kohara M."/>
            <person name="Matsumoto M."/>
            <person name="Matsuno A."/>
            <person name="Nakazaki N."/>
            <person name="Shimpo S."/>
            <person name="Sugimoto M."/>
            <person name="Takeuchi C."/>
            <person name="Yamada M."/>
            <person name="Tabata S."/>
        </authorList>
    </citation>
    <scope>NUCLEOTIDE SEQUENCE [LARGE SCALE GENOMIC DNA]</scope>
    <source>
        <strain>NIES-2133 / IAM M-273 / BP-1</strain>
    </source>
</reference>
<reference key="3">
    <citation type="journal article" date="2007" name="Biochim. Biophys. Acta">
        <title>Ycf12 is a core subunit in the photosystem II complex.</title>
        <authorList>
            <person name="Kashino Y."/>
            <person name="Takahashi T."/>
            <person name="Inoue-Kashino N."/>
            <person name="Ban A."/>
            <person name="Ikeda Y."/>
            <person name="Satoh K."/>
            <person name="Sugiura M."/>
        </authorList>
    </citation>
    <scope>PROTEIN SEQUENCE OF 10-24</scope>
    <scope>PROPEPTIDE</scope>
    <scope>COFACTOR</scope>
    <scope>SUBCELLULAR LOCATION</scope>
</reference>
<reference key="4">
    <citation type="journal article" date="2007" name="Plant Cell Physiol.">
        <title>Absence of the PsbZ subunit prevents association of PsbK and Ycf12 with the PSII complex in the thermophilic cyanobacterium Thermosynechococcus elongatus BP-1.</title>
        <authorList>
            <person name="Iwai M."/>
            <person name="Suzuki T."/>
            <person name="Dohmae N."/>
            <person name="Inoue Y."/>
            <person name="Ikeuchi M."/>
        </authorList>
    </citation>
    <scope>PROTEIN SEQUENCE OF 10-19</scope>
    <scope>COFACTOR</scope>
    <scope>SUBCELLULAR LOCATION</scope>
</reference>
<reference key="5">
    <citation type="journal article" date="2010" name="Plant Cell Physiol.">
        <title>The PsbK subunit is required for the stable assembly and stability of other small subunits in the PSII complex in the thermophilic cyanobacterium Thermosynechococcus elongatus BP-1.</title>
        <authorList>
            <person name="Iwai M."/>
            <person name="Suzuki T."/>
            <person name="Kamiyama A."/>
            <person name="Sakurai I."/>
            <person name="Dohmae N."/>
            <person name="Inoue Y."/>
            <person name="Ikeuchi M."/>
        </authorList>
    </citation>
    <scope>PROTEIN SEQUENCE OF 10-16</scope>
    <scope>FUNCTION</scope>
    <scope>SUBUNIT</scope>
    <scope>SUBCELLULAR LOCATION</scope>
    <scope>DISRUPTION PHENOTYPE</scope>
    <source>
        <strain>NIES-2133 / IAM M-273 / BP-1</strain>
    </source>
</reference>
<reference key="6">
    <citation type="journal article" date="2004" name="Science">
        <title>Architecture of the photosynthetic oxygen-evolving center.</title>
        <authorList>
            <person name="Ferreira K.N."/>
            <person name="Iverson T.M."/>
            <person name="Maghlaoui K."/>
            <person name="Barber J."/>
            <person name="Iwata S."/>
        </authorList>
    </citation>
    <scope>X-RAY CRYSTALLOGRAPHY (3.50 ANGSTROMS) OF 10-46 IN PHOTOSYSTEM II</scope>
    <scope>COFACTOR</scope>
    <scope>SUBUNIT</scope>
    <scope>SUBCELLULAR LOCATION</scope>
</reference>
<reference key="7">
    <citation type="journal article" date="2005" name="Nature">
        <title>Towards complete cofactor arrangement in the 3.0 A resolution structure of photosystem II.</title>
        <authorList>
            <person name="Loll B."/>
            <person name="Kern J."/>
            <person name="Saenger W."/>
            <person name="Zouni A."/>
            <person name="Biesiadka J."/>
        </authorList>
    </citation>
    <scope>X-RAY CRYSTALLOGRAPHY (3.00 ANGSTROMS) OF 10-46 IN PHOTOSYSTEM II</scope>
    <scope>COFACTOR</scope>
    <scope>SUBUNIT</scope>
    <scope>SUBCELLULAR LOCATION</scope>
    <source>
        <strain>NIES-2133 / IAM M-273 / BP-1</strain>
    </source>
</reference>
<reference key="8">
    <citation type="journal article" date="2009" name="Nat. Struct. Mol. Biol.">
        <title>Cyanobacterial photosystem II at 2.9-A resolution and the role of quinones, lipids, channels and chloride.</title>
        <authorList>
            <person name="Guskov A."/>
            <person name="Kern J."/>
            <person name="Gabdulkhakov A."/>
            <person name="Broser M."/>
            <person name="Zouni A."/>
            <person name="Saenger W."/>
        </authorList>
    </citation>
    <scope>X-RAY CRYSTALLOGRAPHY (2.90 ANGSTROMS) OF 10-46 IN PHOTOSYSTEM II</scope>
    <scope>COFACTOR</scope>
    <scope>SUBUNIT</scope>
    <scope>SUBCELLULAR LOCATION</scope>
    <scope>MASS SPECTROMETRY</scope>
    <scope>TOPOLOGY</scope>
    <source>
        <strain>NIES-2133 / IAM M-273 / BP-1</strain>
    </source>
</reference>
<reference key="9">
    <citation type="journal article" date="2010" name="J. Biol. Chem.">
        <title>Crystal structure of monomeric photosystem II from Thermosynechococcus elongatus at 3.6 A resolution.</title>
        <authorList>
            <person name="Broser M."/>
            <person name="Gabdulkhakov A."/>
            <person name="Kern J."/>
            <person name="Guskov A."/>
            <person name="Muh F."/>
            <person name="Saenger W."/>
            <person name="Zouni A."/>
        </authorList>
    </citation>
    <scope>X-RAY CRYSTALLOGRAPHY (3.60 ANGSTROMS) OF 10-46 IN PHOTOSYSTEM II</scope>
    <scope>FUNCTION</scope>
    <scope>COFACTOR</scope>
    <scope>SUBUNIT</scope>
    <scope>SUBCELLULAR LOCATION</scope>
    <scope>MASS SPECTROMETRY</scope>
    <source>
        <strain>NIES-2133 / IAM M-273 / BP-1</strain>
    </source>
</reference>
<reference key="10">
    <citation type="journal article" date="2011" name="J. Biol. Chem.">
        <title>Structural basis of cyanobacterial photosystem II inhibition by the herbicide terbutryn.</title>
        <authorList>
            <person name="Broser M."/>
            <person name="Glockner C."/>
            <person name="Gabdulkhakov A."/>
            <person name="Guskov A."/>
            <person name="Buchta J."/>
            <person name="Kern J."/>
            <person name="Muh F."/>
            <person name="Dau H."/>
            <person name="Saenger W."/>
            <person name="Zouni A."/>
        </authorList>
    </citation>
    <scope>X-RAY CRYSTALLOGRAPHY (3.20 ANGSTROMS) OF 10-46 IN PHOTOSYSTEM II</scope>
    <scope>FUNCTION</scope>
    <scope>COFACTOR</scope>
    <scope>SUBUNIT</scope>
    <scope>SUBCELLULAR LOCATION</scope>
</reference>
<reference key="11">
    <citation type="journal article" date="2012" name="Proc. Natl. Acad. Sci. U.S.A.">
        <title>Room temperature femtosecond X-ray diffraction of photosystem II microcrystals.</title>
        <authorList>
            <person name="Kern J."/>
            <person name="Alonso-Mori R."/>
            <person name="Hellmich J."/>
            <person name="Tran R."/>
            <person name="Hattne J."/>
            <person name="Laksmono H."/>
            <person name="Glockner C."/>
            <person name="Echols N."/>
            <person name="Sierra R.G."/>
            <person name="Sellberg J."/>
            <person name="Lassalle-Kaiser B."/>
            <person name="Gildea R.J."/>
            <person name="Glatzel P."/>
            <person name="Grosse-Kunstleve R.W."/>
            <person name="Latimer M.J."/>
            <person name="McQueen T.A."/>
            <person name="DiFiore D."/>
            <person name="Fry A.R."/>
            <person name="Messerschmidt M."/>
            <person name="Miahnahri A."/>
            <person name="Schafer D.W."/>
            <person name="Seibert M.M."/>
            <person name="Sokaras D."/>
            <person name="Weng T.C."/>
            <person name="Zwart P.H."/>
            <person name="White W.E."/>
            <person name="Adams P.D."/>
            <person name="Bogan M.J."/>
            <person name="Boutet S."/>
            <person name="Williams G.J."/>
            <person name="Messinger J."/>
            <person name="Sauter N.K."/>
            <person name="Zouni A."/>
            <person name="Bergmann U."/>
            <person name="Yano J."/>
            <person name="Yachandra V.K."/>
        </authorList>
    </citation>
    <scope>X-RAY CRYSTALLOGRAPHY (6.56 ANGSTROMS) OF 10-46 IN PHOTOSYSTEM II</scope>
    <scope>COFACTOR</scope>
    <scope>SUBUNIT</scope>
    <scope>SUBCELLULAR LOCATION</scope>
    <source>
        <strain>NIES-2133 / IAM M-273 / BP-1</strain>
    </source>
</reference>
<reference key="12">
    <citation type="journal article" date="2013" name="Science">
        <title>Simultaneous femtosecond X-ray spectroscopy and diffraction of photosystem II at room temperature.</title>
        <authorList>
            <person name="Kern J."/>
            <person name="Alonso-Mori R."/>
            <person name="Tran R."/>
            <person name="Hattne J."/>
            <person name="Gildea R.J."/>
            <person name="Echols N."/>
            <person name="Glockner C."/>
            <person name="Hellmich J."/>
            <person name="Laksmono H."/>
            <person name="Sierra R.G."/>
            <person name="Lassalle-Kaiser B."/>
            <person name="Koroidov S."/>
            <person name="Lampe A."/>
            <person name="Han G."/>
            <person name="Gul S."/>
            <person name="Difiore D."/>
            <person name="Milathianaki D."/>
            <person name="Fry A.R."/>
            <person name="Miahnahri A."/>
            <person name="Schafer D.W."/>
            <person name="Messerschmidt M."/>
            <person name="Seibert M.M."/>
            <person name="Koglin J.E."/>
            <person name="Sokaras D."/>
            <person name="Weng T.C."/>
            <person name="Sellberg J."/>
            <person name="Latimer M.J."/>
            <person name="Grosse-Kunstleve R.W."/>
            <person name="Zwart P.H."/>
            <person name="White W.E."/>
            <person name="Glatzel P."/>
            <person name="Adams P.D."/>
            <person name="Bogan M.J."/>
            <person name="Williams G.J."/>
            <person name="Boutet S."/>
            <person name="Messinger J."/>
            <person name="Zouni A."/>
            <person name="Sauter N.K."/>
            <person name="Yachandra V.K."/>
            <person name="Bergmann U."/>
            <person name="Yano J."/>
        </authorList>
    </citation>
    <scope>X-RAY CRYSTALLOGRAPHY (5.70 ANGSTROMS) IN PHOTOSYSTEM II</scope>
    <scope>COFACTOR</scope>
    <scope>SUBUNIT</scope>
    <scope>SUBCELLULAR LOCATION</scope>
    <source>
        <strain>NIES-2133 / IAM M-273 / BP-1</strain>
    </source>
</reference>
<reference key="13">
    <citation type="journal article" date="2014" name="Nature">
        <title>Serial time-resolved crystallography of photosystem II using a femtosecond X-ray laser.</title>
        <authorList>
            <person name="Kupitz C."/>
            <person name="Basu S."/>
            <person name="Grotjohann I."/>
            <person name="Fromme R."/>
            <person name="Zatsepin N.A."/>
            <person name="Rendek K.N."/>
            <person name="Hunter M.S."/>
            <person name="Shoeman R.L."/>
            <person name="White T.A."/>
            <person name="Wang D."/>
            <person name="James D."/>
            <person name="Yang J.H."/>
            <person name="Cobb D.E."/>
            <person name="Reeder B."/>
            <person name="Sierra R.G."/>
            <person name="Liu H."/>
            <person name="Barty A."/>
            <person name="Aquila A.L."/>
            <person name="Deponte D."/>
            <person name="Kirian R.A."/>
            <person name="Bari S."/>
            <person name="Bergkamp J.J."/>
            <person name="Beyerlein K.R."/>
            <person name="Bogan M.J."/>
            <person name="Caleman C."/>
            <person name="Chao T.C."/>
            <person name="Conrad C.E."/>
            <person name="Davis K.M."/>
            <person name="Fleckenstein H."/>
            <person name="Galli L."/>
            <person name="Hau-Riege S.P."/>
            <person name="Kassemeyer S."/>
            <person name="Laksmono H."/>
            <person name="Liang M."/>
            <person name="Lomb L."/>
            <person name="Marchesini S."/>
            <person name="Martin A.V."/>
            <person name="Messerschmidt M."/>
            <person name="Milathianaki D."/>
            <person name="Nass K."/>
            <person name="Ros A."/>
            <person name="Roy-Chowdhury S."/>
            <person name="Schmidt K."/>
            <person name="Seibert M."/>
            <person name="Steinbrener J."/>
            <person name="Stellato F."/>
            <person name="Yan L."/>
            <person name="Yoon C."/>
            <person name="Moore T.A."/>
            <person name="Moore A.L."/>
            <person name="Pushkar Y."/>
            <person name="Williams G.J."/>
            <person name="Boutet S."/>
            <person name="Doak R.B."/>
            <person name="Weierstall U."/>
            <person name="Frank M."/>
            <person name="Chapman H.N."/>
            <person name="Spence J.C."/>
            <person name="Fromme P."/>
        </authorList>
    </citation>
    <scope>X-RAY CRYSTALLOGRAPHY (5.00 ANGSTROMS) OF 10-46 IN PHOTOSYSTEM II</scope>
    <scope>COFACTOR</scope>
    <scope>SUBUNIT</scope>
    <scope>SUBCELLULAR LOCATION</scope>
    <source>
        <strain>NIES-2133 / IAM M-273 / BP-1</strain>
    </source>
</reference>
<reference key="14">
    <citation type="journal article" date="2014" name="Nat. Commun.">
        <title>Taking snapshots of photosynthetic water oxidation using femtosecond X-ray diffraction and spectroscopy.</title>
        <authorList>
            <person name="Kern J."/>
            <person name="Tran R."/>
            <person name="Alonso-Mori R."/>
            <person name="Koroidov S."/>
            <person name="Echols N."/>
            <person name="Hattne J."/>
            <person name="Ibrahim M."/>
            <person name="Gul S."/>
            <person name="Laksmono H."/>
            <person name="Sierra R.G."/>
            <person name="Gildea R.J."/>
            <person name="Han G."/>
            <person name="Hellmich J."/>
            <person name="Lassalle-Kaiser B."/>
            <person name="Chatterjee R."/>
            <person name="Brewster A.S."/>
            <person name="Stan C.A."/>
            <person name="Gloeckner C."/>
            <person name="Lampe A."/>
            <person name="DiFiore D."/>
            <person name="Milathianaki D."/>
            <person name="Fry A.R."/>
            <person name="Seibert M.M."/>
            <person name="Koglin J.E."/>
            <person name="Gallo E."/>
            <person name="Uhlig J."/>
            <person name="Sokaras D."/>
            <person name="Weng T.C."/>
            <person name="Zwart P.H."/>
            <person name="Skinner D.E."/>
            <person name="Bogan M.J."/>
            <person name="Messerschmidt M."/>
            <person name="Glatzel P."/>
            <person name="Williams G.J."/>
            <person name="Boutet S."/>
            <person name="Adams P.D."/>
            <person name="Zouni A."/>
            <person name="Messinger J."/>
            <person name="Sauter N.K."/>
            <person name="Bergmann U."/>
            <person name="Yano J."/>
            <person name="Yachandra V.K."/>
        </authorList>
    </citation>
    <scope>X-RAY CRYSTALLOGRAPHY (4.50 ANGSTROMS) IN PHOTOSYSTEM II</scope>
    <scope>FUNCTION</scope>
    <scope>COFACTOR</scope>
    <scope>SUBUNIT</scope>
    <scope>SUBCELLULAR LOCATION</scope>
    <source>
        <strain>NIES-2133 / IAM M-273 / BP-1</strain>
    </source>
</reference>
<reference evidence="15 16 17" key="15">
    <citation type="journal article" date="2021" name="Nat. Plants">
        <title>Structural insights into photosystem II assembly.</title>
        <authorList>
            <person name="Zabret J."/>
            <person name="Bohn S."/>
            <person name="Schuller S.K."/>
            <person name="Arnolds O."/>
            <person name="Moller M."/>
            <person name="Meier-Credo J."/>
            <person name="Liauw P."/>
            <person name="Chan A."/>
            <person name="Tajkhorshid E."/>
            <person name="Langer J.D."/>
            <person name="Stoll R."/>
            <person name="Krieger-Liszkay A."/>
            <person name="Engel B.D."/>
            <person name="Rudack T."/>
            <person name="Schuller J.M."/>
            <person name="Nowaczyk M.M."/>
        </authorList>
    </citation>
    <scope>STRUCTURE BY ELECTRON MICROSCOPY (2.68 ANGSTROMS) IN PSII-I ASSEMBLY COMPLEX</scope>
    <scope>SUBUNIT</scope>
    <scope>SUBCELLULAR LOCATION</scope>
    <scope>TOPOLOGY</scope>
    <source>
        <strain>NIES-2133 / IAM M-273 / BP-1</strain>
    </source>
</reference>
<proteinExistence type="evidence at protein level"/>
<evidence type="ECO:0000255" key="1">
    <source>
        <dbReference type="HAMAP-Rule" id="MF_00441"/>
    </source>
</evidence>
<evidence type="ECO:0000269" key="2">
    <source>
    </source>
</evidence>
<evidence type="ECO:0000269" key="3">
    <source>
    </source>
</evidence>
<evidence type="ECO:0000269" key="4">
    <source>
    </source>
</evidence>
<evidence type="ECO:0000269" key="5">
    <source>
    </source>
</evidence>
<evidence type="ECO:0000269" key="6">
    <source>
    </source>
</evidence>
<evidence type="ECO:0000269" key="7">
    <source>
    </source>
</evidence>
<evidence type="ECO:0000269" key="8">
    <source>
    </source>
</evidence>
<evidence type="ECO:0000269" key="9">
    <source>
    </source>
</evidence>
<evidence type="ECO:0000269" key="10">
    <source>
    </source>
</evidence>
<evidence type="ECO:0000269" key="11">
    <source>
    </source>
</evidence>
<evidence type="ECO:0000269" key="12">
    <source>
    </source>
</evidence>
<evidence type="ECO:0000269" key="13">
    <source>
    </source>
</evidence>
<evidence type="ECO:0000269" key="14">
    <source>
    </source>
</evidence>
<evidence type="ECO:0007744" key="15">
    <source>
        <dbReference type="PDB" id="7NHO"/>
    </source>
</evidence>
<evidence type="ECO:0007744" key="16">
    <source>
        <dbReference type="PDB" id="7NHP"/>
    </source>
</evidence>
<evidence type="ECO:0007744" key="17">
    <source>
        <dbReference type="PDB" id="7NHQ"/>
    </source>
</evidence>
<evidence type="ECO:0007829" key="18">
    <source>
        <dbReference type="PDB" id="7YQ2"/>
    </source>
</evidence>
<feature type="propeptide" id="PRO_0000029543" evidence="1 4 5">
    <location>
        <begin position="1"/>
        <end position="9"/>
    </location>
</feature>
<feature type="chain" id="PRO_0000029544" description="Photosystem II reaction center protein K" evidence="1">
    <location>
        <begin position="10"/>
        <end position="46"/>
    </location>
</feature>
<feature type="topological domain" description="Lumenal" evidence="14 17">
    <location>
        <begin position="10"/>
        <end position="19"/>
    </location>
</feature>
<feature type="transmembrane region" description="Helical" evidence="14 17">
    <location>
        <begin position="20"/>
        <end position="39"/>
    </location>
</feature>
<feature type="topological domain" description="Cytoplasmic" evidence="14 17">
    <location>
        <begin position="40"/>
        <end position="46"/>
    </location>
</feature>
<feature type="helix" evidence="18">
    <location>
        <begin position="13"/>
        <end position="18"/>
    </location>
</feature>
<feature type="helix" evidence="18">
    <location>
        <begin position="19"/>
        <end position="24"/>
    </location>
</feature>
<feature type="helix" evidence="18">
    <location>
        <begin position="25"/>
        <end position="27"/>
    </location>
</feature>
<feature type="helix" evidence="18">
    <location>
        <begin position="28"/>
        <end position="42"/>
    </location>
</feature>
<feature type="turn" evidence="18">
    <location>
        <begin position="43"/>
        <end position="45"/>
    </location>
</feature>
<comment type="function">
    <text evidence="1 7 8 9 12">One of the components of the core complex of photosystem II (PSII). PSII is a light-driven water:plastoquinone oxidoreductase that uses light energy to abstract electrons from H(2)O, generating O(2) and a proton gradient subsequently used for ATP formation. It consists of a core antenna complex that captures photons, and an electron transfer chain that converts photonic excitation into a charge separation. Required for association of PsbZ and Psb30/Ycf12 with PSII (PubMed:20194360).</text>
</comment>
<comment type="cofactor">
    <text evidence="2 3 4 5 6 8 9 10 11 12 13">PSII binds multiple chlorophylls, carotenoids and specific lipids.</text>
</comment>
<comment type="subunit">
    <text evidence="1 2 3 6 7 8 9 10 11 12 13 14">PSII is composed of 1 copy each of membrane proteins PsbA, PsbB, PsbC, PsbD, PsbE, PsbF, PsbH, PsbI, PsbJ, PsbK, PsbL, PsbM, PsbT, PsbX, PsbY, PsbZ, Psb30/Ycf12, peripheral proteins PsbO, CyanoQ(PsbQ), PsbU, PsbV and a large number of cofactors. It forms dimeric complexes. Part of a photosystem II (PSII) assembly intermediate complex PSII-I; crystallized from a strain deleted of psbJ, it forms monomeric PSII before addition of the oxygen evolving complex. PSII-I includes 3 assembly factors not found in mature PSII (Psb27, Psb28 and Psb34) (PubMed:33846594).</text>
</comment>
<comment type="subcellular location">
    <subcellularLocation>
        <location evidence="1 2 3 4 5 6 7 8 9 10 11 12 13 14">Cellular thylakoid membrane</location>
        <topology evidence="1 2 3 4 5 6 8 9 10 11 12 13 14">Single-pass membrane protein</topology>
    </subcellularLocation>
</comment>
<comment type="mass spectrometry"/>
<comment type="mass spectrometry"/>
<comment type="disruption phenotype">
    <text evidence="7">No changes in growth under low, medium or high light regimes (3-300 umol photon/m(2)/s). PsbZ and Psb30/Ycf12 are missing from isolated PSII, although low levels of PsbZ can be detected in thylakoid membranes.</text>
</comment>
<comment type="similarity">
    <text evidence="1">Belongs to the PsbK family.</text>
</comment>
<sequence>MIDALVLVAKLPEAYAIFDPLVDVLPVIPVLFLALAFVWQAAVGFR</sequence>